<organism>
    <name type="scientific">Canis lupus familiaris</name>
    <name type="common">Dog</name>
    <name type="synonym">Canis familiaris</name>
    <dbReference type="NCBI Taxonomy" id="9615"/>
    <lineage>
        <taxon>Eukaryota</taxon>
        <taxon>Metazoa</taxon>
        <taxon>Chordata</taxon>
        <taxon>Craniata</taxon>
        <taxon>Vertebrata</taxon>
        <taxon>Euteleostomi</taxon>
        <taxon>Mammalia</taxon>
        <taxon>Eutheria</taxon>
        <taxon>Laurasiatheria</taxon>
        <taxon>Carnivora</taxon>
        <taxon>Caniformia</taxon>
        <taxon>Canidae</taxon>
        <taxon>Canis</taxon>
    </lineage>
</organism>
<comment type="function">
    <molecule>Pancreatic polypeptide</molecule>
    <text evidence="1">Hormone secreted by pancreatic cells that acts as a regulator of pancreatic and gastrointestinal functions probably by signaling through the G protein-coupled receptor NPY4R2.</text>
</comment>
<comment type="subcellular location">
    <subcellularLocation>
        <location evidence="1">Secreted</location>
    </subcellularLocation>
</comment>
<comment type="similarity">
    <text evidence="7">Belongs to the NPY family.</text>
</comment>
<keyword id="KW-0027">Amidation</keyword>
<keyword id="KW-0165">Cleavage on pair of basic residues</keyword>
<keyword id="KW-0903">Direct protein sequencing</keyword>
<keyword id="KW-0372">Hormone</keyword>
<keyword id="KW-1185">Reference proteome</keyword>
<keyword id="KW-0964">Secreted</keyword>
<keyword id="KW-0732">Signal</keyword>
<protein>
    <recommendedName>
        <fullName evidence="7">Pancreatic polypeptide prohormone</fullName>
    </recommendedName>
    <component>
        <recommendedName>
            <fullName evidence="6">Pancreatic polypeptide</fullName>
            <shortName evidence="6">PP</shortName>
        </recommendedName>
    </component>
    <component>
        <recommendedName>
            <fullName evidence="6">Pancreatic icosapeptide</fullName>
        </recommendedName>
    </component>
</protein>
<dbReference type="EMBL" id="M35596">
    <property type="protein sequence ID" value="AAA30886.1"/>
    <property type="molecule type" value="mRNA"/>
</dbReference>
<dbReference type="PIR" id="A40904">
    <property type="entry name" value="PCDG"/>
</dbReference>
<dbReference type="RefSeq" id="NP_001300805.1">
    <property type="nucleotide sequence ID" value="NM_001313876.2"/>
</dbReference>
<dbReference type="SMR" id="P01299"/>
<dbReference type="FunCoup" id="P01299">
    <property type="interactions" value="37"/>
</dbReference>
<dbReference type="STRING" id="9615.ENSCAFP00000021236"/>
<dbReference type="PaxDb" id="9612-ENSCAFP00000021236"/>
<dbReference type="GeneID" id="490944"/>
<dbReference type="KEGG" id="cfa:490944"/>
<dbReference type="CTD" id="5539"/>
<dbReference type="eggNOG" id="ENOG502TD4B">
    <property type="taxonomic scope" value="Eukaryota"/>
</dbReference>
<dbReference type="HOGENOM" id="CLU_165150_1_0_1"/>
<dbReference type="InParanoid" id="P01299"/>
<dbReference type="OMA" id="MAATRRC"/>
<dbReference type="OrthoDB" id="9901897at2759"/>
<dbReference type="TreeFam" id="TF332778"/>
<dbReference type="Proteomes" id="UP000002254">
    <property type="component" value="Unplaced"/>
</dbReference>
<dbReference type="Proteomes" id="UP000694429">
    <property type="component" value="Unplaced"/>
</dbReference>
<dbReference type="Proteomes" id="UP000694542">
    <property type="component" value="Unplaced"/>
</dbReference>
<dbReference type="Proteomes" id="UP000805418">
    <property type="component" value="Unplaced"/>
</dbReference>
<dbReference type="GO" id="GO:0005615">
    <property type="term" value="C:extracellular space"/>
    <property type="evidence" value="ECO:0000318"/>
    <property type="project" value="GO_Central"/>
</dbReference>
<dbReference type="GO" id="GO:0005184">
    <property type="term" value="F:neuropeptide hormone activity"/>
    <property type="evidence" value="ECO:0000318"/>
    <property type="project" value="GO_Central"/>
</dbReference>
<dbReference type="GO" id="GO:0031841">
    <property type="term" value="F:neuropeptide Y receptor binding"/>
    <property type="evidence" value="ECO:0000318"/>
    <property type="project" value="GO_Central"/>
</dbReference>
<dbReference type="GO" id="GO:0007631">
    <property type="term" value="P:feeding behavior"/>
    <property type="evidence" value="ECO:0000318"/>
    <property type="project" value="GO_Central"/>
</dbReference>
<dbReference type="GO" id="GO:0007218">
    <property type="term" value="P:neuropeptide signaling pathway"/>
    <property type="evidence" value="ECO:0000318"/>
    <property type="project" value="GO_Central"/>
</dbReference>
<dbReference type="CDD" id="cd00126">
    <property type="entry name" value="PAH"/>
    <property type="match status" value="1"/>
</dbReference>
<dbReference type="Gene3D" id="6.10.250.900">
    <property type="match status" value="1"/>
</dbReference>
<dbReference type="InterPro" id="IPR001955">
    <property type="entry name" value="Pancreatic_hormone-like"/>
</dbReference>
<dbReference type="InterPro" id="IPR020392">
    <property type="entry name" value="Pancreatic_hormone-like_CS"/>
</dbReference>
<dbReference type="PANTHER" id="PTHR10533">
    <property type="entry name" value="NEUROPEPTIDE Y/PANCREATIC HORMONE/PEPTIDE YY"/>
    <property type="match status" value="1"/>
</dbReference>
<dbReference type="PANTHER" id="PTHR10533:SF2">
    <property type="entry name" value="PANCREATIC POLYPEPTIDE PROHORMONE"/>
    <property type="match status" value="1"/>
</dbReference>
<dbReference type="Pfam" id="PF00159">
    <property type="entry name" value="Hormone_3"/>
    <property type="match status" value="1"/>
</dbReference>
<dbReference type="PRINTS" id="PR00278">
    <property type="entry name" value="PANCHORMONE"/>
</dbReference>
<dbReference type="SMART" id="SM00309">
    <property type="entry name" value="PAH"/>
    <property type="match status" value="1"/>
</dbReference>
<dbReference type="PROSITE" id="PS00265">
    <property type="entry name" value="PANCREATIC_HORMONE_1"/>
    <property type="match status" value="1"/>
</dbReference>
<dbReference type="PROSITE" id="PS50276">
    <property type="entry name" value="PANCREATIC_HORMONE_2"/>
    <property type="match status" value="1"/>
</dbReference>
<feature type="signal peptide" evidence="5">
    <location>
        <begin position="1"/>
        <end position="29"/>
    </location>
</feature>
<feature type="peptide" id="PRO_0000025358" description="Pancreatic polypeptide" evidence="2">
    <location>
        <begin position="30"/>
        <end position="65"/>
    </location>
</feature>
<feature type="peptide" id="PRO_0000025359" description="Pancreatic icosapeptide" evidence="3">
    <location>
        <begin position="69"/>
        <end position="88"/>
    </location>
</feature>
<feature type="propeptide" id="PRO_0000025360">
    <location>
        <begin position="89"/>
        <end position="93"/>
    </location>
</feature>
<feature type="modified residue" description="Tyrosine amide" evidence="3 4">
    <location>
        <position position="65"/>
    </location>
</feature>
<sequence length="93" mass="10427">MPAACRCLFLLLLSACVALLLQPPLGTRGAPLEPVYPGDDATPEQMAQYAAELRRYINMLTRPRYGKRDRGEMRDILEWGSPHAAAPRELMDE</sequence>
<name>PAHO_CANLF</name>
<evidence type="ECO:0000250" key="1">
    <source>
        <dbReference type="UniProtKB" id="P01298"/>
    </source>
</evidence>
<evidence type="ECO:0000269" key="2">
    <source>
    </source>
</evidence>
<evidence type="ECO:0000269" key="3">
    <source>
    </source>
</evidence>
<evidence type="ECO:0000269" key="4">
    <source>
    </source>
</evidence>
<evidence type="ECO:0000269" key="5">
    <source ref="2"/>
</evidence>
<evidence type="ECO:0000303" key="6">
    <source>
    </source>
</evidence>
<evidence type="ECO:0000305" key="7"/>
<accession>P01299</accession>
<gene>
    <name type="primary">PPY</name>
</gene>
<reference key="1">
    <citation type="journal article" date="1987" name="Mol. Endocrinol.">
        <title>Canine pancreatic polypeptide complementary deoxyribonucleic acid sequence: pancreatic polypeptide and insulin messenger ribonucleic acid distribution in the lobes of the pancreas.</title>
        <authorList>
            <person name="Toothman P."/>
            <person name="Paquette T.L."/>
        </authorList>
    </citation>
    <scope>NUCLEOTIDE SEQUENCE [MRNA]</scope>
</reference>
<reference key="2">
    <citation type="book" date="1979" name="Methods of hormone radioimmunoassay (2nd ed.)">
        <editorList>
            <person name="Jaffe B.M."/>
            <person name="Behrman H.R."/>
        </editorList>
        <authorList>
            <person name="Chance R.E."/>
            <person name="Moon N.E."/>
            <person name="Johnson M.G."/>
        </authorList>
    </citation>
    <scope>PROTEIN SEQUENCE OF 30-65</scope>
</reference>
<reference key="3">
    <citation type="journal article" date="1981" name="Nature">
        <title>Isolation and biogenesis of a new peptide from pancreatic islets.</title>
        <authorList>
            <person name="Schwartz T.W."/>
            <person name="Tager H.S."/>
        </authorList>
    </citation>
    <scope>PROTEIN SEQUENCE OF 69-88</scope>
    <scope>AMIDATION AT TYR-65</scope>
</reference>
<reference key="4">
    <citation type="journal article" date="1986" name="Biochem. J.">
        <title>Cat pancreatic eicosapeptide and its biosynthetic intermediate. Conservation of a monobasic processing site.</title>
        <authorList>
            <person name="Nielsen H.V."/>
            <person name="Gether U."/>
            <person name="Schwartz T.W."/>
        </authorList>
    </citation>
    <scope>PROTEIN SEQUENCE OF 89-93</scope>
    <scope>AMIDATION AT TYR-65</scope>
</reference>
<proteinExistence type="evidence at protein level"/>